<comment type="function">
    <text evidence="2">Carrier of the growing fatty acid chain in fatty acid biosynthesis.</text>
</comment>
<comment type="pathway">
    <text evidence="2">Lipid metabolism; fatty acid biosynthesis.</text>
</comment>
<comment type="subcellular location">
    <subcellularLocation>
        <location evidence="2">Cytoplasm</location>
    </subcellularLocation>
</comment>
<comment type="PTM">
    <text evidence="2">4'-phosphopantetheine is transferred from CoA to a specific serine of apo-ACP by AcpS. This modification is essential for activity because fatty acids are bound in thioester linkage to the sulfhydryl of the prosthetic group.</text>
</comment>
<comment type="similarity">
    <text evidence="2">Belongs to the acyl carrier protein (ACP) family.</text>
</comment>
<evidence type="ECO:0000250" key="1"/>
<evidence type="ECO:0000255" key="2">
    <source>
        <dbReference type="HAMAP-Rule" id="MF_01217"/>
    </source>
</evidence>
<evidence type="ECO:0000255" key="3">
    <source>
        <dbReference type="PROSITE-ProRule" id="PRU00258"/>
    </source>
</evidence>
<sequence>MSTIEERVKKIIGEQLGVKQEEVTNNASFVEDLGADSLDTVELVMALEEEFDTEIPDEEAEKITTVQAAIDYINGHQA</sequence>
<reference key="1">
    <citation type="journal article" date="2001" name="Nature">
        <title>Complete genome sequence of a multiple drug resistant Salmonella enterica serovar Typhi CT18.</title>
        <authorList>
            <person name="Parkhill J."/>
            <person name="Dougan G."/>
            <person name="James K.D."/>
            <person name="Thomson N.R."/>
            <person name="Pickard D."/>
            <person name="Wain J."/>
            <person name="Churcher C.M."/>
            <person name="Mungall K.L."/>
            <person name="Bentley S.D."/>
            <person name="Holden M.T.G."/>
            <person name="Sebaihia M."/>
            <person name="Baker S."/>
            <person name="Basham D."/>
            <person name="Brooks K."/>
            <person name="Chillingworth T."/>
            <person name="Connerton P."/>
            <person name="Cronin A."/>
            <person name="Davis P."/>
            <person name="Davies R.M."/>
            <person name="Dowd L."/>
            <person name="White N."/>
            <person name="Farrar J."/>
            <person name="Feltwell T."/>
            <person name="Hamlin N."/>
            <person name="Haque A."/>
            <person name="Hien T.T."/>
            <person name="Holroyd S."/>
            <person name="Jagels K."/>
            <person name="Krogh A."/>
            <person name="Larsen T.S."/>
            <person name="Leather S."/>
            <person name="Moule S."/>
            <person name="O'Gaora P."/>
            <person name="Parry C."/>
            <person name="Quail M.A."/>
            <person name="Rutherford K.M."/>
            <person name="Simmonds M."/>
            <person name="Skelton J."/>
            <person name="Stevens K."/>
            <person name="Whitehead S."/>
            <person name="Barrell B.G."/>
        </authorList>
    </citation>
    <scope>NUCLEOTIDE SEQUENCE [LARGE SCALE GENOMIC DNA]</scope>
    <source>
        <strain>CT18</strain>
    </source>
</reference>
<reference key="2">
    <citation type="journal article" date="2003" name="J. Bacteriol.">
        <title>Comparative genomics of Salmonella enterica serovar Typhi strains Ty2 and CT18.</title>
        <authorList>
            <person name="Deng W."/>
            <person name="Liou S.-R."/>
            <person name="Plunkett G. III"/>
            <person name="Mayhew G.F."/>
            <person name="Rose D.J."/>
            <person name="Burland V."/>
            <person name="Kodoyianni V."/>
            <person name="Schwartz D.C."/>
            <person name="Blattner F.R."/>
        </authorList>
    </citation>
    <scope>NUCLEOTIDE SEQUENCE [LARGE SCALE GENOMIC DNA]</scope>
    <source>
        <strain>ATCC 700931 / Ty2</strain>
    </source>
</reference>
<organism>
    <name type="scientific">Salmonella typhi</name>
    <dbReference type="NCBI Taxonomy" id="90370"/>
    <lineage>
        <taxon>Bacteria</taxon>
        <taxon>Pseudomonadati</taxon>
        <taxon>Pseudomonadota</taxon>
        <taxon>Gammaproteobacteria</taxon>
        <taxon>Enterobacterales</taxon>
        <taxon>Enterobacteriaceae</taxon>
        <taxon>Salmonella</taxon>
    </lineage>
</organism>
<proteinExistence type="inferred from homology"/>
<keyword id="KW-0963">Cytoplasm</keyword>
<keyword id="KW-0275">Fatty acid biosynthesis</keyword>
<keyword id="KW-0276">Fatty acid metabolism</keyword>
<keyword id="KW-0444">Lipid biosynthesis</keyword>
<keyword id="KW-0443">Lipid metabolism</keyword>
<keyword id="KW-0596">Phosphopantetheine</keyword>
<keyword id="KW-0597">Phosphoprotein</keyword>
<name>ACP_SALTI</name>
<protein>
    <recommendedName>
        <fullName evidence="2">Acyl carrier protein</fullName>
        <shortName evidence="2">ACP</shortName>
    </recommendedName>
    <alternativeName>
        <fullName>Cytosolic-activating factor</fullName>
        <shortName>CAF</shortName>
    </alternativeName>
    <alternativeName>
        <fullName>Fatty acid synthase acyl carrier protein</fullName>
    </alternativeName>
</protein>
<gene>
    <name evidence="2" type="primary">acpP</name>
    <name type="ordered locus">STY1235</name>
    <name type="ordered locus">t1724</name>
</gene>
<accession>P0A6B2</accession>
<accession>P02901</accession>
<accession>Q53352</accession>
<feature type="initiator methionine" description="Removed" evidence="1">
    <location>
        <position position="1"/>
    </location>
</feature>
<feature type="chain" id="PRO_0000180182" description="Acyl carrier protein">
    <location>
        <begin position="2"/>
        <end position="78"/>
    </location>
</feature>
<feature type="domain" description="Carrier" evidence="3">
    <location>
        <begin position="2"/>
        <end position="77"/>
    </location>
</feature>
<feature type="modified residue" description="O-(pantetheine 4'-phosphoryl)serine" evidence="3">
    <location>
        <position position="37"/>
    </location>
</feature>
<dbReference type="EMBL" id="AL513382">
    <property type="protein sequence ID" value="CAD08320.1"/>
    <property type="molecule type" value="Genomic_DNA"/>
</dbReference>
<dbReference type="EMBL" id="AE014613">
    <property type="protein sequence ID" value="AAO69348.1"/>
    <property type="molecule type" value="Genomic_DNA"/>
</dbReference>
<dbReference type="RefSeq" id="NP_455689.1">
    <property type="nucleotide sequence ID" value="NC_003198.1"/>
</dbReference>
<dbReference type="RefSeq" id="WP_000103754.1">
    <property type="nucleotide sequence ID" value="NZ_WSUR01000030.1"/>
</dbReference>
<dbReference type="SMR" id="P0A6B2"/>
<dbReference type="STRING" id="220341.gene:17585200"/>
<dbReference type="GeneID" id="98387866"/>
<dbReference type="KEGG" id="stt:t1724"/>
<dbReference type="KEGG" id="sty:STY1235"/>
<dbReference type="PATRIC" id="fig|220341.7.peg.1237"/>
<dbReference type="eggNOG" id="COG0236">
    <property type="taxonomic scope" value="Bacteria"/>
</dbReference>
<dbReference type="HOGENOM" id="CLU_108696_5_1_6"/>
<dbReference type="OMA" id="TMEASFI"/>
<dbReference type="OrthoDB" id="9804551at2"/>
<dbReference type="UniPathway" id="UPA00094"/>
<dbReference type="Proteomes" id="UP000000541">
    <property type="component" value="Chromosome"/>
</dbReference>
<dbReference type="Proteomes" id="UP000002670">
    <property type="component" value="Chromosome"/>
</dbReference>
<dbReference type="GO" id="GO:0005829">
    <property type="term" value="C:cytosol"/>
    <property type="evidence" value="ECO:0007669"/>
    <property type="project" value="TreeGrafter"/>
</dbReference>
<dbReference type="GO" id="GO:0016020">
    <property type="term" value="C:membrane"/>
    <property type="evidence" value="ECO:0007669"/>
    <property type="project" value="GOC"/>
</dbReference>
<dbReference type="GO" id="GO:0000035">
    <property type="term" value="F:acyl binding"/>
    <property type="evidence" value="ECO:0007669"/>
    <property type="project" value="TreeGrafter"/>
</dbReference>
<dbReference type="GO" id="GO:0000036">
    <property type="term" value="F:acyl carrier activity"/>
    <property type="evidence" value="ECO:0007669"/>
    <property type="project" value="UniProtKB-UniRule"/>
</dbReference>
<dbReference type="GO" id="GO:0009245">
    <property type="term" value="P:lipid A biosynthetic process"/>
    <property type="evidence" value="ECO:0007669"/>
    <property type="project" value="TreeGrafter"/>
</dbReference>
<dbReference type="FunFam" id="1.10.1200.10:FF:000001">
    <property type="entry name" value="Acyl carrier protein"/>
    <property type="match status" value="1"/>
</dbReference>
<dbReference type="Gene3D" id="1.10.1200.10">
    <property type="entry name" value="ACP-like"/>
    <property type="match status" value="1"/>
</dbReference>
<dbReference type="HAMAP" id="MF_01217">
    <property type="entry name" value="Acyl_carrier"/>
    <property type="match status" value="1"/>
</dbReference>
<dbReference type="InterPro" id="IPR003231">
    <property type="entry name" value="ACP"/>
</dbReference>
<dbReference type="InterPro" id="IPR036736">
    <property type="entry name" value="ACP-like_sf"/>
</dbReference>
<dbReference type="InterPro" id="IPR009081">
    <property type="entry name" value="PP-bd_ACP"/>
</dbReference>
<dbReference type="InterPro" id="IPR006162">
    <property type="entry name" value="Ppantetheine_attach_site"/>
</dbReference>
<dbReference type="NCBIfam" id="TIGR00517">
    <property type="entry name" value="acyl_carrier"/>
    <property type="match status" value="1"/>
</dbReference>
<dbReference type="NCBIfam" id="NF002148">
    <property type="entry name" value="PRK00982.1-2"/>
    <property type="match status" value="1"/>
</dbReference>
<dbReference type="NCBIfam" id="NF002149">
    <property type="entry name" value="PRK00982.1-3"/>
    <property type="match status" value="1"/>
</dbReference>
<dbReference type="NCBIfam" id="NF002150">
    <property type="entry name" value="PRK00982.1-4"/>
    <property type="match status" value="1"/>
</dbReference>
<dbReference type="NCBIfam" id="NF002151">
    <property type="entry name" value="PRK00982.1-5"/>
    <property type="match status" value="1"/>
</dbReference>
<dbReference type="PANTHER" id="PTHR20863">
    <property type="entry name" value="ACYL CARRIER PROTEIN"/>
    <property type="match status" value="1"/>
</dbReference>
<dbReference type="PANTHER" id="PTHR20863:SF76">
    <property type="entry name" value="CARRIER DOMAIN-CONTAINING PROTEIN"/>
    <property type="match status" value="1"/>
</dbReference>
<dbReference type="Pfam" id="PF00550">
    <property type="entry name" value="PP-binding"/>
    <property type="match status" value="1"/>
</dbReference>
<dbReference type="SUPFAM" id="SSF47336">
    <property type="entry name" value="ACP-like"/>
    <property type="match status" value="1"/>
</dbReference>
<dbReference type="PROSITE" id="PS50075">
    <property type="entry name" value="CARRIER"/>
    <property type="match status" value="1"/>
</dbReference>
<dbReference type="PROSITE" id="PS00012">
    <property type="entry name" value="PHOSPHOPANTETHEINE"/>
    <property type="match status" value="1"/>
</dbReference>